<evidence type="ECO:0000305" key="1"/>
<dbReference type="EMBL" id="L09228">
    <property type="protein sequence ID" value="AAA67489.1"/>
    <property type="molecule type" value="Genomic_DNA"/>
</dbReference>
<dbReference type="EMBL" id="AL009126">
    <property type="protein sequence ID" value="CAB14252.1"/>
    <property type="molecule type" value="Genomic_DNA"/>
</dbReference>
<dbReference type="EMBL" id="M84227">
    <property type="protein sequence ID" value="AAA22376.1"/>
    <property type="status" value="ALT_FRAME"/>
    <property type="molecule type" value="Genomic_DNA"/>
</dbReference>
<dbReference type="PIR" id="S45551">
    <property type="entry name" value="S45551"/>
</dbReference>
<dbReference type="RefSeq" id="NP_390201.1">
    <property type="nucleotide sequence ID" value="NC_000964.3"/>
</dbReference>
<dbReference type="RefSeq" id="WP_004399065.1">
    <property type="nucleotide sequence ID" value="NZ_OZ025638.1"/>
</dbReference>
<dbReference type="FunCoup" id="P35156">
    <property type="interactions" value="125"/>
</dbReference>
<dbReference type="STRING" id="224308.BSU23200"/>
<dbReference type="PaxDb" id="224308-BSU23200"/>
<dbReference type="EnsemblBacteria" id="CAB14252">
    <property type="protein sequence ID" value="CAB14252"/>
    <property type="gene ID" value="BSU_23200"/>
</dbReference>
<dbReference type="GeneID" id="938956"/>
<dbReference type="KEGG" id="bsu:BSU23200"/>
<dbReference type="PATRIC" id="fig|224308.179.peg.2527"/>
<dbReference type="eggNOG" id="ENOG5030A29">
    <property type="taxonomic scope" value="Bacteria"/>
</dbReference>
<dbReference type="InParanoid" id="P35156"/>
<dbReference type="OrthoDB" id="2691359at2"/>
<dbReference type="BioCyc" id="BSUB:BSU23200-MONOMER"/>
<dbReference type="Proteomes" id="UP000001570">
    <property type="component" value="Chromosome"/>
</dbReference>
<dbReference type="InterPro" id="IPR025013">
    <property type="entry name" value="DUF3907"/>
</dbReference>
<dbReference type="Pfam" id="PF13047">
    <property type="entry name" value="DUF3907"/>
    <property type="match status" value="1"/>
</dbReference>
<comment type="sequence caution" evidence="1">
    <conflict type="frameshift">
        <sequence resource="EMBL-CDS" id="AAA22376"/>
    </conflict>
</comment>
<reference key="1">
    <citation type="journal article" date="1993" name="Mol. Microbiol.">
        <title>The organization of the Bacillus subtilis 168 chromosome region between the spoVA and serA genetic loci, based on sequence data.</title>
        <authorList>
            <person name="Sorokin A.V."/>
            <person name="Zumstein E."/>
            <person name="Azevedo V."/>
            <person name="Ehrlich S.D."/>
            <person name="Serror P."/>
        </authorList>
    </citation>
    <scope>NUCLEOTIDE SEQUENCE [GENOMIC DNA]</scope>
    <source>
        <strain>168 / Marburg / ATCC 6051 / DSM 10 / JCM 1465 / NBRC 13719 / NCIMB 3610 / NRRL NRS-744 / VKM B-501</strain>
    </source>
</reference>
<reference key="2">
    <citation type="journal article" date="1997" name="Nature">
        <title>The complete genome sequence of the Gram-positive bacterium Bacillus subtilis.</title>
        <authorList>
            <person name="Kunst F."/>
            <person name="Ogasawara N."/>
            <person name="Moszer I."/>
            <person name="Albertini A.M."/>
            <person name="Alloni G."/>
            <person name="Azevedo V."/>
            <person name="Bertero M.G."/>
            <person name="Bessieres P."/>
            <person name="Bolotin A."/>
            <person name="Borchert S."/>
            <person name="Borriss R."/>
            <person name="Boursier L."/>
            <person name="Brans A."/>
            <person name="Braun M."/>
            <person name="Brignell S.C."/>
            <person name="Bron S."/>
            <person name="Brouillet S."/>
            <person name="Bruschi C.V."/>
            <person name="Caldwell B."/>
            <person name="Capuano V."/>
            <person name="Carter N.M."/>
            <person name="Choi S.-K."/>
            <person name="Codani J.-J."/>
            <person name="Connerton I.F."/>
            <person name="Cummings N.J."/>
            <person name="Daniel R.A."/>
            <person name="Denizot F."/>
            <person name="Devine K.M."/>
            <person name="Duesterhoeft A."/>
            <person name="Ehrlich S.D."/>
            <person name="Emmerson P.T."/>
            <person name="Entian K.-D."/>
            <person name="Errington J."/>
            <person name="Fabret C."/>
            <person name="Ferrari E."/>
            <person name="Foulger D."/>
            <person name="Fritz C."/>
            <person name="Fujita M."/>
            <person name="Fujita Y."/>
            <person name="Fuma S."/>
            <person name="Galizzi A."/>
            <person name="Galleron N."/>
            <person name="Ghim S.-Y."/>
            <person name="Glaser P."/>
            <person name="Goffeau A."/>
            <person name="Golightly E.J."/>
            <person name="Grandi G."/>
            <person name="Guiseppi G."/>
            <person name="Guy B.J."/>
            <person name="Haga K."/>
            <person name="Haiech J."/>
            <person name="Harwood C.R."/>
            <person name="Henaut A."/>
            <person name="Hilbert H."/>
            <person name="Holsappel S."/>
            <person name="Hosono S."/>
            <person name="Hullo M.-F."/>
            <person name="Itaya M."/>
            <person name="Jones L.-M."/>
            <person name="Joris B."/>
            <person name="Karamata D."/>
            <person name="Kasahara Y."/>
            <person name="Klaerr-Blanchard M."/>
            <person name="Klein C."/>
            <person name="Kobayashi Y."/>
            <person name="Koetter P."/>
            <person name="Koningstein G."/>
            <person name="Krogh S."/>
            <person name="Kumano M."/>
            <person name="Kurita K."/>
            <person name="Lapidus A."/>
            <person name="Lardinois S."/>
            <person name="Lauber J."/>
            <person name="Lazarevic V."/>
            <person name="Lee S.-M."/>
            <person name="Levine A."/>
            <person name="Liu H."/>
            <person name="Masuda S."/>
            <person name="Mauel C."/>
            <person name="Medigue C."/>
            <person name="Medina N."/>
            <person name="Mellado R.P."/>
            <person name="Mizuno M."/>
            <person name="Moestl D."/>
            <person name="Nakai S."/>
            <person name="Noback M."/>
            <person name="Noone D."/>
            <person name="O'Reilly M."/>
            <person name="Ogawa K."/>
            <person name="Ogiwara A."/>
            <person name="Oudega B."/>
            <person name="Park S.-H."/>
            <person name="Parro V."/>
            <person name="Pohl T.M."/>
            <person name="Portetelle D."/>
            <person name="Porwollik S."/>
            <person name="Prescott A.M."/>
            <person name="Presecan E."/>
            <person name="Pujic P."/>
            <person name="Purnelle B."/>
            <person name="Rapoport G."/>
            <person name="Rey M."/>
            <person name="Reynolds S."/>
            <person name="Rieger M."/>
            <person name="Rivolta C."/>
            <person name="Rocha E."/>
            <person name="Roche B."/>
            <person name="Rose M."/>
            <person name="Sadaie Y."/>
            <person name="Sato T."/>
            <person name="Scanlan E."/>
            <person name="Schleich S."/>
            <person name="Schroeter R."/>
            <person name="Scoffone F."/>
            <person name="Sekiguchi J."/>
            <person name="Sekowska A."/>
            <person name="Seror S.J."/>
            <person name="Serror P."/>
            <person name="Shin B.-S."/>
            <person name="Soldo B."/>
            <person name="Sorokin A."/>
            <person name="Tacconi E."/>
            <person name="Takagi T."/>
            <person name="Takahashi H."/>
            <person name="Takemaru K."/>
            <person name="Takeuchi M."/>
            <person name="Tamakoshi A."/>
            <person name="Tanaka T."/>
            <person name="Terpstra P."/>
            <person name="Tognoni A."/>
            <person name="Tosato V."/>
            <person name="Uchiyama S."/>
            <person name="Vandenbol M."/>
            <person name="Vannier F."/>
            <person name="Vassarotti A."/>
            <person name="Viari A."/>
            <person name="Wambutt R."/>
            <person name="Wedler E."/>
            <person name="Wedler H."/>
            <person name="Weitzenegger T."/>
            <person name="Winters P."/>
            <person name="Wipat A."/>
            <person name="Yamamoto H."/>
            <person name="Yamane K."/>
            <person name="Yasumoto K."/>
            <person name="Yata K."/>
            <person name="Yoshida K."/>
            <person name="Yoshikawa H.-F."/>
            <person name="Zumstein E."/>
            <person name="Yoshikawa H."/>
            <person name="Danchin A."/>
        </authorList>
    </citation>
    <scope>NUCLEOTIDE SEQUENCE [LARGE SCALE GENOMIC DNA]</scope>
    <source>
        <strain>168</strain>
    </source>
</reference>
<reference key="3">
    <citation type="journal article" date="1992" name="J. Bacteriol.">
        <title>Isolation and sequence analysis of dacB, which encodes a sporulation-specific penicillin-binding protein in Bacillus subtilis.</title>
        <authorList>
            <person name="Buchanan C.E."/>
            <person name="Ling M.-L."/>
        </authorList>
    </citation>
    <scope>NUCLEOTIDE SEQUENCE [GENOMIC DNA] OF 34-179</scope>
    <source>
        <strain>168</strain>
    </source>
</reference>
<sequence length="179" mass="20351">MKEAKCERQIHEGKIPNEMGHSIVRAQTQKTGEFLSMVVNTVNDYLNQTTLESLQAELPIEKGYCCDVLSTLRRMAVFCEGGAEACRRLLMQEPFQEARAEKTLYNVYHQCIEEFFMPKKDTWCENSRASYTGVSAIEFYHAVPASLEQLLLPLSAAFLKMREELAHYEASGSSMAPIR</sequence>
<organism>
    <name type="scientific">Bacillus subtilis (strain 168)</name>
    <dbReference type="NCBI Taxonomy" id="224308"/>
    <lineage>
        <taxon>Bacteria</taxon>
        <taxon>Bacillati</taxon>
        <taxon>Bacillota</taxon>
        <taxon>Bacilli</taxon>
        <taxon>Bacillales</taxon>
        <taxon>Bacillaceae</taxon>
        <taxon>Bacillus</taxon>
    </lineage>
</organism>
<protein>
    <recommendedName>
        <fullName>Uncharacterized protein YpuI</fullName>
    </recommendedName>
    <alternativeName>
        <fullName>ORFX9</fullName>
    </alternativeName>
</protein>
<feature type="chain" id="PRO_0000049732" description="Uncharacterized protein YpuI">
    <location>
        <begin position="1"/>
        <end position="179"/>
    </location>
</feature>
<feature type="sequence conflict" description="In Ref. 3; AAA22376." evidence="1" ref="3">
    <original>DT</original>
    <variation>AQ</variation>
    <location>
        <begin position="121"/>
        <end position="122"/>
    </location>
</feature>
<gene>
    <name type="primary">ypuI</name>
    <name type="ordered locus">BSU23200</name>
</gene>
<name>YPUI_BACSU</name>
<proteinExistence type="predicted"/>
<keyword id="KW-1185">Reference proteome</keyword>
<accession>P35156</accession>
<accession>Q45542</accession>